<organism>
    <name type="scientific">Caldanaerobacter subterraneus subsp. tengcongensis (strain DSM 15242 / JCM 11007 / NBRC 100824 / MB4)</name>
    <name type="common">Thermoanaerobacter tengcongensis</name>
    <dbReference type="NCBI Taxonomy" id="273068"/>
    <lineage>
        <taxon>Bacteria</taxon>
        <taxon>Bacillati</taxon>
        <taxon>Bacillota</taxon>
        <taxon>Clostridia</taxon>
        <taxon>Thermoanaerobacterales</taxon>
        <taxon>Thermoanaerobacteraceae</taxon>
        <taxon>Caldanaerobacter</taxon>
    </lineage>
</organism>
<proteinExistence type="inferred from homology"/>
<comment type="catalytic activity">
    <reaction evidence="1">
        <text>D-mannitol 1-phosphate + NAD(+) = beta-D-fructose 6-phosphate + NADH + H(+)</text>
        <dbReference type="Rhea" id="RHEA:19661"/>
        <dbReference type="ChEBI" id="CHEBI:15378"/>
        <dbReference type="ChEBI" id="CHEBI:57540"/>
        <dbReference type="ChEBI" id="CHEBI:57634"/>
        <dbReference type="ChEBI" id="CHEBI:57945"/>
        <dbReference type="ChEBI" id="CHEBI:61381"/>
        <dbReference type="EC" id="1.1.1.17"/>
    </reaction>
</comment>
<comment type="similarity">
    <text evidence="1">Belongs to the mannitol dehydrogenase family.</text>
</comment>
<accession>Q8RCS0</accession>
<gene>
    <name evidence="1" type="primary">mtlD</name>
    <name type="ordered locus">TTE0342</name>
</gene>
<reference key="1">
    <citation type="journal article" date="2002" name="Genome Res.">
        <title>A complete sequence of the T. tengcongensis genome.</title>
        <authorList>
            <person name="Bao Q."/>
            <person name="Tian Y."/>
            <person name="Li W."/>
            <person name="Xu Z."/>
            <person name="Xuan Z."/>
            <person name="Hu S."/>
            <person name="Dong W."/>
            <person name="Yang J."/>
            <person name="Chen Y."/>
            <person name="Xue Y."/>
            <person name="Xu Y."/>
            <person name="Lai X."/>
            <person name="Huang L."/>
            <person name="Dong X."/>
            <person name="Ma Y."/>
            <person name="Ling L."/>
            <person name="Tan H."/>
            <person name="Chen R."/>
            <person name="Wang J."/>
            <person name="Yu J."/>
            <person name="Yang H."/>
        </authorList>
    </citation>
    <scope>NUCLEOTIDE SEQUENCE [LARGE SCALE GENOMIC DNA]</scope>
    <source>
        <strain>DSM 15242 / JCM 11007 / NBRC 100824 / MB4</strain>
    </source>
</reference>
<sequence>MLKALHFGAGNIGRGFIGYLLNKSGYEVTFVDISKEIVDNINKYKKYNVIILKEPVEKEEVKEVKALHLEEEDKVLDAFLEADMVTTSVGVSNLSSIGGRLKKYLKARKEKNEKPLDIMACENALFATDVLRERVVKEEDDDFITYLNLKVGFPNTAVDRIVPAVKIDKKLPVDVAVEEFFEWDIEKNKIKGNLQIEGVELVDDLKPYIERKLFLLNGAHATTAYLGYLRGYTYIHQAIKDDNIRAIVKGMQEEISTALSKKYDVDKESLMAYAEKVIKRFENPYLQDEVTRVGREPLRKLSSEDRLIAPLKLCSEVGITPNFILYGIAAGLLFDYKEDAQAVKMREYVEQFGIKKAVNVITGLEEESDLVEEIEKRYFELKGKLI</sequence>
<dbReference type="EC" id="1.1.1.17" evidence="1"/>
<dbReference type="EMBL" id="AE008691">
    <property type="protein sequence ID" value="AAM23634.1"/>
    <property type="molecule type" value="Genomic_DNA"/>
</dbReference>
<dbReference type="RefSeq" id="WP_011024796.1">
    <property type="nucleotide sequence ID" value="NC_003869.1"/>
</dbReference>
<dbReference type="SMR" id="Q8RCS0"/>
<dbReference type="STRING" id="273068.TTE0342"/>
<dbReference type="KEGG" id="tte:TTE0342"/>
<dbReference type="eggNOG" id="COG0246">
    <property type="taxonomic scope" value="Bacteria"/>
</dbReference>
<dbReference type="HOGENOM" id="CLU_036089_2_0_9"/>
<dbReference type="OrthoDB" id="271711at2"/>
<dbReference type="Proteomes" id="UP000000555">
    <property type="component" value="Chromosome"/>
</dbReference>
<dbReference type="GO" id="GO:0005829">
    <property type="term" value="C:cytosol"/>
    <property type="evidence" value="ECO:0007669"/>
    <property type="project" value="TreeGrafter"/>
</dbReference>
<dbReference type="GO" id="GO:0008926">
    <property type="term" value="F:mannitol-1-phosphate 5-dehydrogenase activity"/>
    <property type="evidence" value="ECO:0007669"/>
    <property type="project" value="UniProtKB-UniRule"/>
</dbReference>
<dbReference type="GO" id="GO:0019592">
    <property type="term" value="P:mannitol catabolic process"/>
    <property type="evidence" value="ECO:0007669"/>
    <property type="project" value="TreeGrafter"/>
</dbReference>
<dbReference type="Gene3D" id="1.10.1040.10">
    <property type="entry name" value="N-(1-d-carboxylethyl)-l-norvaline Dehydrogenase, domain 2"/>
    <property type="match status" value="1"/>
</dbReference>
<dbReference type="Gene3D" id="3.40.50.720">
    <property type="entry name" value="NAD(P)-binding Rossmann-like Domain"/>
    <property type="match status" value="1"/>
</dbReference>
<dbReference type="HAMAP" id="MF_00196">
    <property type="entry name" value="Mannitol_dehydrog"/>
    <property type="match status" value="1"/>
</dbReference>
<dbReference type="InterPro" id="IPR008927">
    <property type="entry name" value="6-PGluconate_DH-like_C_sf"/>
</dbReference>
<dbReference type="InterPro" id="IPR013328">
    <property type="entry name" value="6PGD_dom2"/>
</dbReference>
<dbReference type="InterPro" id="IPR023028">
    <property type="entry name" value="Mannitol_1_phos_5_DH"/>
</dbReference>
<dbReference type="InterPro" id="IPR000669">
    <property type="entry name" value="Mannitol_DH"/>
</dbReference>
<dbReference type="InterPro" id="IPR013118">
    <property type="entry name" value="Mannitol_DH_C"/>
</dbReference>
<dbReference type="InterPro" id="IPR023027">
    <property type="entry name" value="Mannitol_DH_CS"/>
</dbReference>
<dbReference type="InterPro" id="IPR013131">
    <property type="entry name" value="Mannitol_DH_N"/>
</dbReference>
<dbReference type="InterPro" id="IPR036291">
    <property type="entry name" value="NAD(P)-bd_dom_sf"/>
</dbReference>
<dbReference type="NCBIfam" id="NF002646">
    <property type="entry name" value="PRK02318.1-2"/>
    <property type="match status" value="1"/>
</dbReference>
<dbReference type="NCBIfam" id="NF002652">
    <property type="entry name" value="PRK02318.2-5"/>
    <property type="match status" value="1"/>
</dbReference>
<dbReference type="NCBIfam" id="NF002653">
    <property type="entry name" value="PRK02318.2-6"/>
    <property type="match status" value="1"/>
</dbReference>
<dbReference type="PANTHER" id="PTHR30524:SF0">
    <property type="entry name" value="ALTRONATE OXIDOREDUCTASE-RELATED"/>
    <property type="match status" value="1"/>
</dbReference>
<dbReference type="PANTHER" id="PTHR30524">
    <property type="entry name" value="MANNITOL-1-PHOSPHATE 5-DEHYDROGENASE"/>
    <property type="match status" value="1"/>
</dbReference>
<dbReference type="Pfam" id="PF01232">
    <property type="entry name" value="Mannitol_dh"/>
    <property type="match status" value="1"/>
</dbReference>
<dbReference type="Pfam" id="PF08125">
    <property type="entry name" value="Mannitol_dh_C"/>
    <property type="match status" value="1"/>
</dbReference>
<dbReference type="PRINTS" id="PR00084">
    <property type="entry name" value="MTLDHDRGNASE"/>
</dbReference>
<dbReference type="SUPFAM" id="SSF48179">
    <property type="entry name" value="6-phosphogluconate dehydrogenase C-terminal domain-like"/>
    <property type="match status" value="1"/>
</dbReference>
<dbReference type="SUPFAM" id="SSF51735">
    <property type="entry name" value="NAD(P)-binding Rossmann-fold domains"/>
    <property type="match status" value="1"/>
</dbReference>
<dbReference type="PROSITE" id="PS00974">
    <property type="entry name" value="MANNITOL_DHGENASE"/>
    <property type="match status" value="1"/>
</dbReference>
<evidence type="ECO:0000255" key="1">
    <source>
        <dbReference type="HAMAP-Rule" id="MF_00196"/>
    </source>
</evidence>
<keyword id="KW-0520">NAD</keyword>
<keyword id="KW-0560">Oxidoreductase</keyword>
<keyword id="KW-1185">Reference proteome</keyword>
<protein>
    <recommendedName>
        <fullName evidence="1">Mannitol-1-phosphate 5-dehydrogenase</fullName>
        <ecNumber evidence="1">1.1.1.17</ecNumber>
    </recommendedName>
</protein>
<feature type="chain" id="PRO_0000170728" description="Mannitol-1-phosphate 5-dehydrogenase">
    <location>
        <begin position="1"/>
        <end position="386"/>
    </location>
</feature>
<feature type="binding site" evidence="1">
    <location>
        <begin position="4"/>
        <end position="15"/>
    </location>
    <ligand>
        <name>NAD(+)</name>
        <dbReference type="ChEBI" id="CHEBI:57540"/>
    </ligand>
</feature>
<name>MTLD_CALS4</name>